<protein>
    <recommendedName>
        <fullName evidence="1">Tryptophan synthase alpha chain</fullName>
        <ecNumber evidence="1">4.2.1.20</ecNumber>
    </recommendedName>
</protein>
<evidence type="ECO:0000255" key="1">
    <source>
        <dbReference type="HAMAP-Rule" id="MF_00131"/>
    </source>
</evidence>
<accession>B5F4M3</accession>
<feature type="chain" id="PRO_1000095746" description="Tryptophan synthase alpha chain">
    <location>
        <begin position="1"/>
        <end position="268"/>
    </location>
</feature>
<feature type="active site" description="Proton acceptor" evidence="1">
    <location>
        <position position="49"/>
    </location>
</feature>
<feature type="active site" description="Proton acceptor" evidence="1">
    <location>
        <position position="60"/>
    </location>
</feature>
<sequence length="268" mass="28672">MERYENLFAQLNDRREGAFVPFVTLGDPGIEQSLKIIDTLIDAGADALELGVPFSDPLADGPTIQNANLRAFAAGVTPAQCFEMLALIREKHPTIPIGLLMYANLVFNNGIDAFYARCEQVGVDSVLVADVPVEESAPFRQAALRHNIAPIFICPPNADDDLLRQVASYGRGYTYLLSRSGVTGAENRGALPLHHLIEKLKEYHAAPALQGFGISSPEQVSAAVRAGAAGAISGSAIVKIIEKNLASPEQMLAELRSFVSAMKAASRA</sequence>
<organism>
    <name type="scientific">Salmonella agona (strain SL483)</name>
    <dbReference type="NCBI Taxonomy" id="454166"/>
    <lineage>
        <taxon>Bacteria</taxon>
        <taxon>Pseudomonadati</taxon>
        <taxon>Pseudomonadota</taxon>
        <taxon>Gammaproteobacteria</taxon>
        <taxon>Enterobacterales</taxon>
        <taxon>Enterobacteriaceae</taxon>
        <taxon>Salmonella</taxon>
    </lineage>
</organism>
<comment type="function">
    <text evidence="1">The alpha subunit is responsible for the aldol cleavage of indoleglycerol phosphate to indole and glyceraldehyde 3-phosphate.</text>
</comment>
<comment type="catalytic activity">
    <reaction evidence="1">
        <text>(1S,2R)-1-C-(indol-3-yl)glycerol 3-phosphate + L-serine = D-glyceraldehyde 3-phosphate + L-tryptophan + H2O</text>
        <dbReference type="Rhea" id="RHEA:10532"/>
        <dbReference type="ChEBI" id="CHEBI:15377"/>
        <dbReference type="ChEBI" id="CHEBI:33384"/>
        <dbReference type="ChEBI" id="CHEBI:57912"/>
        <dbReference type="ChEBI" id="CHEBI:58866"/>
        <dbReference type="ChEBI" id="CHEBI:59776"/>
        <dbReference type="EC" id="4.2.1.20"/>
    </reaction>
</comment>
<comment type="pathway">
    <text evidence="1">Amino-acid biosynthesis; L-tryptophan biosynthesis; L-tryptophan from chorismate: step 5/5.</text>
</comment>
<comment type="subunit">
    <text evidence="1">Tetramer of two alpha and two beta chains.</text>
</comment>
<comment type="similarity">
    <text evidence="1">Belongs to the TrpA family.</text>
</comment>
<dbReference type="EC" id="4.2.1.20" evidence="1"/>
<dbReference type="EMBL" id="CP001138">
    <property type="protein sequence ID" value="ACH51421.1"/>
    <property type="molecule type" value="Genomic_DNA"/>
</dbReference>
<dbReference type="RefSeq" id="WP_000443029.1">
    <property type="nucleotide sequence ID" value="NC_011149.1"/>
</dbReference>
<dbReference type="SMR" id="B5F4M3"/>
<dbReference type="KEGG" id="sea:SeAg_B1419"/>
<dbReference type="HOGENOM" id="CLU_016734_0_4_6"/>
<dbReference type="UniPathway" id="UPA00035">
    <property type="reaction ID" value="UER00044"/>
</dbReference>
<dbReference type="Proteomes" id="UP000008819">
    <property type="component" value="Chromosome"/>
</dbReference>
<dbReference type="GO" id="GO:0005829">
    <property type="term" value="C:cytosol"/>
    <property type="evidence" value="ECO:0007669"/>
    <property type="project" value="TreeGrafter"/>
</dbReference>
<dbReference type="GO" id="GO:0004834">
    <property type="term" value="F:tryptophan synthase activity"/>
    <property type="evidence" value="ECO:0007669"/>
    <property type="project" value="UniProtKB-UniRule"/>
</dbReference>
<dbReference type="CDD" id="cd04724">
    <property type="entry name" value="Tryptophan_synthase_alpha"/>
    <property type="match status" value="1"/>
</dbReference>
<dbReference type="FunFam" id="3.20.20.70:FF:000037">
    <property type="entry name" value="Tryptophan synthase alpha chain"/>
    <property type="match status" value="1"/>
</dbReference>
<dbReference type="Gene3D" id="3.20.20.70">
    <property type="entry name" value="Aldolase class I"/>
    <property type="match status" value="1"/>
</dbReference>
<dbReference type="HAMAP" id="MF_00131">
    <property type="entry name" value="Trp_synth_alpha"/>
    <property type="match status" value="1"/>
</dbReference>
<dbReference type="InterPro" id="IPR013785">
    <property type="entry name" value="Aldolase_TIM"/>
</dbReference>
<dbReference type="InterPro" id="IPR011060">
    <property type="entry name" value="RibuloseP-bd_barrel"/>
</dbReference>
<dbReference type="InterPro" id="IPR018204">
    <property type="entry name" value="Trp_synthase_alpha_AS"/>
</dbReference>
<dbReference type="InterPro" id="IPR002028">
    <property type="entry name" value="Trp_synthase_suA"/>
</dbReference>
<dbReference type="NCBIfam" id="TIGR00262">
    <property type="entry name" value="trpA"/>
    <property type="match status" value="1"/>
</dbReference>
<dbReference type="PANTHER" id="PTHR43406:SF1">
    <property type="entry name" value="TRYPTOPHAN SYNTHASE ALPHA CHAIN, CHLOROPLASTIC"/>
    <property type="match status" value="1"/>
</dbReference>
<dbReference type="PANTHER" id="PTHR43406">
    <property type="entry name" value="TRYPTOPHAN SYNTHASE, ALPHA CHAIN"/>
    <property type="match status" value="1"/>
</dbReference>
<dbReference type="Pfam" id="PF00290">
    <property type="entry name" value="Trp_syntA"/>
    <property type="match status" value="1"/>
</dbReference>
<dbReference type="SUPFAM" id="SSF51366">
    <property type="entry name" value="Ribulose-phoshate binding barrel"/>
    <property type="match status" value="1"/>
</dbReference>
<dbReference type="PROSITE" id="PS00167">
    <property type="entry name" value="TRP_SYNTHASE_ALPHA"/>
    <property type="match status" value="1"/>
</dbReference>
<reference key="1">
    <citation type="journal article" date="2011" name="J. Bacteriol.">
        <title>Comparative genomics of 28 Salmonella enterica isolates: evidence for CRISPR-mediated adaptive sublineage evolution.</title>
        <authorList>
            <person name="Fricke W.F."/>
            <person name="Mammel M.K."/>
            <person name="McDermott P.F."/>
            <person name="Tartera C."/>
            <person name="White D.G."/>
            <person name="Leclerc J.E."/>
            <person name="Ravel J."/>
            <person name="Cebula T.A."/>
        </authorList>
    </citation>
    <scope>NUCLEOTIDE SEQUENCE [LARGE SCALE GENOMIC DNA]</scope>
    <source>
        <strain>SL483</strain>
    </source>
</reference>
<proteinExistence type="inferred from homology"/>
<gene>
    <name evidence="1" type="primary">trpA</name>
    <name type="ordered locus">SeAg_B1419</name>
</gene>
<name>TRPA_SALA4</name>
<keyword id="KW-0028">Amino-acid biosynthesis</keyword>
<keyword id="KW-0057">Aromatic amino acid biosynthesis</keyword>
<keyword id="KW-0456">Lyase</keyword>
<keyword id="KW-0822">Tryptophan biosynthesis</keyword>